<keyword id="KW-0963">Cytoplasm</keyword>
<keyword id="KW-0378">Hydrolase</keyword>
<keyword id="KW-1185">Reference proteome</keyword>
<keyword id="KW-0694">RNA-binding</keyword>
<keyword id="KW-0820">tRNA-binding</keyword>
<dbReference type="EC" id="3.1.1.96" evidence="1"/>
<dbReference type="EMBL" id="AP010656">
    <property type="protein sequence ID" value="BAG83987.1"/>
    <property type="molecule type" value="Genomic_DNA"/>
</dbReference>
<dbReference type="RefSeq" id="WP_012573743.1">
    <property type="nucleotide sequence ID" value="NC_011565.1"/>
</dbReference>
<dbReference type="SMR" id="B6YS15"/>
<dbReference type="STRING" id="511995.CFPG_724"/>
<dbReference type="KEGG" id="aps:CFPG_724"/>
<dbReference type="eggNOG" id="COG1490">
    <property type="taxonomic scope" value="Bacteria"/>
</dbReference>
<dbReference type="HOGENOM" id="CLU_076901_1_0_10"/>
<dbReference type="OrthoDB" id="9801395at2"/>
<dbReference type="Proteomes" id="UP000000723">
    <property type="component" value="Chromosome"/>
</dbReference>
<dbReference type="GO" id="GO:0005737">
    <property type="term" value="C:cytoplasm"/>
    <property type="evidence" value="ECO:0007669"/>
    <property type="project" value="UniProtKB-SubCell"/>
</dbReference>
<dbReference type="GO" id="GO:0051500">
    <property type="term" value="F:D-tyrosyl-tRNA(Tyr) deacylase activity"/>
    <property type="evidence" value="ECO:0007669"/>
    <property type="project" value="TreeGrafter"/>
</dbReference>
<dbReference type="GO" id="GO:0106026">
    <property type="term" value="F:Gly-tRNA(Ala) deacylase activity"/>
    <property type="evidence" value="ECO:0007669"/>
    <property type="project" value="UniProtKB-UniRule"/>
</dbReference>
<dbReference type="GO" id="GO:0043908">
    <property type="term" value="F:Ser(Gly)-tRNA(Ala) hydrolase activity"/>
    <property type="evidence" value="ECO:0007669"/>
    <property type="project" value="UniProtKB-UniRule"/>
</dbReference>
<dbReference type="GO" id="GO:0000049">
    <property type="term" value="F:tRNA binding"/>
    <property type="evidence" value="ECO:0007669"/>
    <property type="project" value="UniProtKB-UniRule"/>
</dbReference>
<dbReference type="GO" id="GO:0019478">
    <property type="term" value="P:D-amino acid catabolic process"/>
    <property type="evidence" value="ECO:0007669"/>
    <property type="project" value="UniProtKB-UniRule"/>
</dbReference>
<dbReference type="FunFam" id="3.50.80.10:FF:000001">
    <property type="entry name" value="D-aminoacyl-tRNA deacylase"/>
    <property type="match status" value="1"/>
</dbReference>
<dbReference type="Gene3D" id="3.50.80.10">
    <property type="entry name" value="D-tyrosyl-tRNA(Tyr) deacylase"/>
    <property type="match status" value="1"/>
</dbReference>
<dbReference type="HAMAP" id="MF_00518">
    <property type="entry name" value="Deacylase_Dtd"/>
    <property type="match status" value="1"/>
</dbReference>
<dbReference type="InterPro" id="IPR003732">
    <property type="entry name" value="Daa-tRNA_deacyls_DTD"/>
</dbReference>
<dbReference type="InterPro" id="IPR023509">
    <property type="entry name" value="DTD-like_sf"/>
</dbReference>
<dbReference type="NCBIfam" id="TIGR00256">
    <property type="entry name" value="D-aminoacyl-tRNA deacylase"/>
    <property type="match status" value="1"/>
</dbReference>
<dbReference type="PANTHER" id="PTHR10472:SF5">
    <property type="entry name" value="D-AMINOACYL-TRNA DEACYLASE 1"/>
    <property type="match status" value="1"/>
</dbReference>
<dbReference type="PANTHER" id="PTHR10472">
    <property type="entry name" value="D-TYROSYL-TRNA TYR DEACYLASE"/>
    <property type="match status" value="1"/>
</dbReference>
<dbReference type="Pfam" id="PF02580">
    <property type="entry name" value="Tyr_Deacylase"/>
    <property type="match status" value="1"/>
</dbReference>
<dbReference type="SUPFAM" id="SSF69500">
    <property type="entry name" value="DTD-like"/>
    <property type="match status" value="1"/>
</dbReference>
<evidence type="ECO:0000255" key="1">
    <source>
        <dbReference type="HAMAP-Rule" id="MF_00518"/>
    </source>
</evidence>
<gene>
    <name evidence="1" type="primary">dtd</name>
    <name type="ordered locus">CFPG_724</name>
</gene>
<reference key="1">
    <citation type="journal article" date="2008" name="Science">
        <title>Genome of an endosymbiont coupling N2 fixation to cellulolysis within RT protist cells in termite gut.</title>
        <authorList>
            <person name="Hongoh Y."/>
            <person name="Sharma V.K."/>
            <person name="Prakash T."/>
            <person name="Noda S."/>
            <person name="Toh H."/>
            <person name="Taylor T.D."/>
            <person name="Kudo T."/>
            <person name="Sakaki Y."/>
            <person name="Toyoda A."/>
            <person name="Hattori M."/>
            <person name="Ohkuma M."/>
        </authorList>
    </citation>
    <scope>NUCLEOTIDE SEQUENCE [LARGE SCALE GENOMIC DNA]</scope>
</reference>
<organism>
    <name type="scientific">Azobacteroides pseudotrichonymphae genomovar. CFP2</name>
    <dbReference type="NCBI Taxonomy" id="511995"/>
    <lineage>
        <taxon>Bacteria</taxon>
        <taxon>Pseudomonadati</taxon>
        <taxon>Bacteroidota</taxon>
        <taxon>Bacteroidia</taxon>
        <taxon>Bacteroidales</taxon>
        <taxon>Candidatus Azobacteroides</taxon>
    </lineage>
</organism>
<protein>
    <recommendedName>
        <fullName evidence="1">D-aminoacyl-tRNA deacylase</fullName>
        <shortName evidence="1">DTD</shortName>
        <ecNumber evidence="1">3.1.1.96</ecNumber>
    </recommendedName>
    <alternativeName>
        <fullName evidence="1">Gly-tRNA(Ala) deacylase</fullName>
    </alternativeName>
</protein>
<name>DTD_AZOPC</name>
<proteinExistence type="inferred from homology"/>
<accession>B6YS15</accession>
<sequence length="150" mass="16839">MRVVIQRVLKASVTINHQLKSSIGQGLLIFLGIEENDKQEDIDFLVKKIVNLRIFNDNKGAMNRSLLDIEGELLCVSQFTLFASTKKGNRPSYIRASKSEKAIPLYEKFCATISSAMSKIIQTGTFKTNMKIKLINDGPVTICIDSKNRE</sequence>
<comment type="function">
    <text evidence="1">An aminoacyl-tRNA editing enzyme that deacylates mischarged D-aminoacyl-tRNAs. Also deacylates mischarged glycyl-tRNA(Ala), protecting cells against glycine mischarging by AlaRS. Acts via tRNA-based rather than protein-based catalysis; rejects L-amino acids rather than detecting D-amino acids in the active site. By recycling D-aminoacyl-tRNA to D-amino acids and free tRNA molecules, this enzyme counteracts the toxicity associated with the formation of D-aminoacyl-tRNA entities in vivo and helps enforce protein L-homochirality.</text>
</comment>
<comment type="catalytic activity">
    <reaction evidence="1">
        <text>glycyl-tRNA(Ala) + H2O = tRNA(Ala) + glycine + H(+)</text>
        <dbReference type="Rhea" id="RHEA:53744"/>
        <dbReference type="Rhea" id="RHEA-COMP:9657"/>
        <dbReference type="Rhea" id="RHEA-COMP:13640"/>
        <dbReference type="ChEBI" id="CHEBI:15377"/>
        <dbReference type="ChEBI" id="CHEBI:15378"/>
        <dbReference type="ChEBI" id="CHEBI:57305"/>
        <dbReference type="ChEBI" id="CHEBI:78442"/>
        <dbReference type="ChEBI" id="CHEBI:78522"/>
        <dbReference type="EC" id="3.1.1.96"/>
    </reaction>
</comment>
<comment type="catalytic activity">
    <reaction evidence="1">
        <text>a D-aminoacyl-tRNA + H2O = a tRNA + a D-alpha-amino acid + H(+)</text>
        <dbReference type="Rhea" id="RHEA:13953"/>
        <dbReference type="Rhea" id="RHEA-COMP:10123"/>
        <dbReference type="Rhea" id="RHEA-COMP:10124"/>
        <dbReference type="ChEBI" id="CHEBI:15377"/>
        <dbReference type="ChEBI" id="CHEBI:15378"/>
        <dbReference type="ChEBI" id="CHEBI:59871"/>
        <dbReference type="ChEBI" id="CHEBI:78442"/>
        <dbReference type="ChEBI" id="CHEBI:79333"/>
        <dbReference type="EC" id="3.1.1.96"/>
    </reaction>
</comment>
<comment type="subunit">
    <text evidence="1">Homodimer.</text>
</comment>
<comment type="subcellular location">
    <subcellularLocation>
        <location evidence="1">Cytoplasm</location>
    </subcellularLocation>
</comment>
<comment type="domain">
    <text evidence="1">A Gly-cisPro motif from one monomer fits into the active site of the other monomer to allow specific chiral rejection of L-amino acids.</text>
</comment>
<comment type="similarity">
    <text evidence="1">Belongs to the DTD family.</text>
</comment>
<feature type="chain" id="PRO_1000127490" description="D-aminoacyl-tRNA deacylase">
    <location>
        <begin position="1"/>
        <end position="150"/>
    </location>
</feature>
<feature type="short sequence motif" description="Gly-cisPro motif, important for rejection of L-amino acids" evidence="1">
    <location>
        <begin position="138"/>
        <end position="139"/>
    </location>
</feature>